<sequence>MNKTSKKHLALPYRPGVGMMILNADNKIFVGKRIDTKISAWQMPQGGIVPGETPSIAAMREMLEEIGSSKGYIIAESKCWYSYDVPSFLIPKLWDGNFRGQKQRWFLIRFTGTNEDININTLNPEFDEWRWASLDELLSIIIPFKRKLYQAVVKEFESLIQ</sequence>
<reference key="1">
    <citation type="submission" date="2007-09" db="EMBL/GenBank/DDBJ databases">
        <title>Complete genome sequencing of Rickettsia bellii.</title>
        <authorList>
            <person name="Madan A."/>
            <person name="Lee H."/>
            <person name="Madan A."/>
            <person name="Yoon J.-G."/>
            <person name="Ryu G.-Y."/>
            <person name="Dasch G."/>
            <person name="Ereemeva M."/>
        </authorList>
    </citation>
    <scope>NUCLEOTIDE SEQUENCE [LARGE SCALE GENOMIC DNA]</scope>
    <source>
        <strain>OSU 85-389</strain>
    </source>
</reference>
<feature type="chain" id="PRO_1000021987" description="RNA pyrophosphohydrolase">
    <location>
        <begin position="1"/>
        <end position="161"/>
    </location>
</feature>
<feature type="domain" description="Nudix hydrolase" evidence="1">
    <location>
        <begin position="12"/>
        <end position="154"/>
    </location>
</feature>
<feature type="short sequence motif" description="Nudix box">
    <location>
        <begin position="46"/>
        <end position="67"/>
    </location>
</feature>
<protein>
    <recommendedName>
        <fullName evidence="1">RNA pyrophosphohydrolase</fullName>
        <ecNumber evidence="1">3.6.1.-</ecNumber>
    </recommendedName>
    <alternativeName>
        <fullName evidence="1">(Di)nucleoside polyphosphate hydrolase</fullName>
    </alternativeName>
</protein>
<keyword id="KW-0378">Hydrolase</keyword>
<gene>
    <name evidence="1" type="primary">rppH</name>
    <name evidence="1" type="synonym">nudH</name>
    <name type="ordered locus">A1I_03785</name>
</gene>
<name>RPPH_RICB8</name>
<evidence type="ECO:0000255" key="1">
    <source>
        <dbReference type="HAMAP-Rule" id="MF_00298"/>
    </source>
</evidence>
<accession>A8GW83</accession>
<dbReference type="EC" id="3.6.1.-" evidence="1"/>
<dbReference type="EMBL" id="CP000849">
    <property type="protein sequence ID" value="ABV79110.1"/>
    <property type="molecule type" value="Genomic_DNA"/>
</dbReference>
<dbReference type="RefSeq" id="WP_011477635.1">
    <property type="nucleotide sequence ID" value="NC_009883.1"/>
</dbReference>
<dbReference type="SMR" id="A8GW83"/>
<dbReference type="KEGG" id="rbo:A1I_03785"/>
<dbReference type="HOGENOM" id="CLU_087195_3_0_5"/>
<dbReference type="GO" id="GO:0005737">
    <property type="term" value="C:cytoplasm"/>
    <property type="evidence" value="ECO:0007669"/>
    <property type="project" value="TreeGrafter"/>
</dbReference>
<dbReference type="GO" id="GO:0034353">
    <property type="term" value="F:mRNA 5'-diphosphatase activity"/>
    <property type="evidence" value="ECO:0007669"/>
    <property type="project" value="TreeGrafter"/>
</dbReference>
<dbReference type="GO" id="GO:0006402">
    <property type="term" value="P:mRNA catabolic process"/>
    <property type="evidence" value="ECO:0007669"/>
    <property type="project" value="TreeGrafter"/>
</dbReference>
<dbReference type="CDD" id="cd03671">
    <property type="entry name" value="NUDIX_Ap4A_hydrolase_plant_like"/>
    <property type="match status" value="1"/>
</dbReference>
<dbReference type="Gene3D" id="3.90.79.10">
    <property type="entry name" value="Nucleoside Triphosphate Pyrophosphohydrolase"/>
    <property type="match status" value="1"/>
</dbReference>
<dbReference type="HAMAP" id="MF_00298">
    <property type="entry name" value="Nudix_RppH"/>
    <property type="match status" value="1"/>
</dbReference>
<dbReference type="InterPro" id="IPR015797">
    <property type="entry name" value="NUDIX_hydrolase-like_dom_sf"/>
</dbReference>
<dbReference type="InterPro" id="IPR020084">
    <property type="entry name" value="NUDIX_hydrolase_CS"/>
</dbReference>
<dbReference type="InterPro" id="IPR000086">
    <property type="entry name" value="NUDIX_hydrolase_dom"/>
</dbReference>
<dbReference type="InterPro" id="IPR022927">
    <property type="entry name" value="RppH"/>
</dbReference>
<dbReference type="NCBIfam" id="NF001936">
    <property type="entry name" value="PRK00714.1-3"/>
    <property type="match status" value="1"/>
</dbReference>
<dbReference type="NCBIfam" id="NF001938">
    <property type="entry name" value="PRK00714.1-5"/>
    <property type="match status" value="1"/>
</dbReference>
<dbReference type="PANTHER" id="PTHR23114">
    <property type="entry name" value="M7GPPPN-MRNA HYDROLASE"/>
    <property type="match status" value="1"/>
</dbReference>
<dbReference type="PANTHER" id="PTHR23114:SF17">
    <property type="entry name" value="M7GPPPN-MRNA HYDROLASE"/>
    <property type="match status" value="1"/>
</dbReference>
<dbReference type="Pfam" id="PF00293">
    <property type="entry name" value="NUDIX"/>
    <property type="match status" value="1"/>
</dbReference>
<dbReference type="SUPFAM" id="SSF55811">
    <property type="entry name" value="Nudix"/>
    <property type="match status" value="1"/>
</dbReference>
<dbReference type="PROSITE" id="PS51462">
    <property type="entry name" value="NUDIX"/>
    <property type="match status" value="1"/>
</dbReference>
<dbReference type="PROSITE" id="PS00893">
    <property type="entry name" value="NUDIX_BOX"/>
    <property type="match status" value="1"/>
</dbReference>
<comment type="function">
    <text evidence="1">Accelerates the degradation of transcripts by removing pyrophosphate from the 5'-end of triphosphorylated RNA, leading to a more labile monophosphorylated state that can stimulate subsequent ribonuclease cleavage.</text>
</comment>
<comment type="cofactor">
    <cofactor evidence="1">
        <name>a divalent metal cation</name>
        <dbReference type="ChEBI" id="CHEBI:60240"/>
    </cofactor>
</comment>
<comment type="similarity">
    <text evidence="1">Belongs to the Nudix hydrolase family. RppH subfamily.</text>
</comment>
<organism>
    <name type="scientific">Rickettsia bellii (strain OSU 85-389)</name>
    <dbReference type="NCBI Taxonomy" id="391896"/>
    <lineage>
        <taxon>Bacteria</taxon>
        <taxon>Pseudomonadati</taxon>
        <taxon>Pseudomonadota</taxon>
        <taxon>Alphaproteobacteria</taxon>
        <taxon>Rickettsiales</taxon>
        <taxon>Rickettsiaceae</taxon>
        <taxon>Rickettsieae</taxon>
        <taxon>Rickettsia</taxon>
        <taxon>belli group</taxon>
    </lineage>
</organism>
<proteinExistence type="inferred from homology"/>